<organism>
    <name type="scientific">Synechococcus sp. (strain WH7805)</name>
    <dbReference type="NCBI Taxonomy" id="59931"/>
    <lineage>
        <taxon>Bacteria</taxon>
        <taxon>Bacillati</taxon>
        <taxon>Cyanobacteriota</taxon>
        <taxon>Cyanophyceae</taxon>
        <taxon>Synechococcales</taxon>
        <taxon>Synechococcaceae</taxon>
        <taxon>Synechococcus</taxon>
    </lineage>
</organism>
<comment type="catalytic activity">
    <reaction evidence="1 2">
        <text>urea + 2 H2O + H(+) = hydrogencarbonate + 2 NH4(+)</text>
        <dbReference type="Rhea" id="RHEA:20557"/>
        <dbReference type="ChEBI" id="CHEBI:15377"/>
        <dbReference type="ChEBI" id="CHEBI:15378"/>
        <dbReference type="ChEBI" id="CHEBI:16199"/>
        <dbReference type="ChEBI" id="CHEBI:17544"/>
        <dbReference type="ChEBI" id="CHEBI:28938"/>
        <dbReference type="EC" id="3.5.1.5"/>
    </reaction>
</comment>
<comment type="cofactor">
    <cofactor evidence="1">
        <name>Ni cation</name>
        <dbReference type="ChEBI" id="CHEBI:25516"/>
    </cofactor>
    <text evidence="1">Binds 2 nickel ions per subunit.</text>
</comment>
<comment type="biophysicochemical properties">
    <kinetics>
        <KM evidence="2">0.232 mM for urea</KM>
        <Vmax evidence="2">0.0013 mmol/min/mg enzyme</Vmax>
    </kinetics>
    <phDependence>
        <text evidence="2">Optimum pH is 8.6.</text>
    </phDependence>
    <temperatureDependence>
        <text evidence="2">Optimum temperature is 45 degrees Celsius.</text>
    </temperatureDependence>
</comment>
<comment type="pathway">
    <text evidence="1">Nitrogen metabolism; urea degradation; CO(2) and NH(3) from urea (urease route): step 1/1.</text>
</comment>
<comment type="subunit">
    <text evidence="1">Heterotrimer of UreA (gamma), UreB (beta) and UreC (alpha) subunits. Three heterotrimers associate to form the active enzyme.</text>
</comment>
<comment type="subcellular location">
    <subcellularLocation>
        <location evidence="1">Cytoplasm</location>
    </subcellularLocation>
</comment>
<comment type="PTM">
    <text evidence="1">Carboxylation allows a single lysine to coordinate two nickel ions.</text>
</comment>
<comment type="similarity">
    <text evidence="1">Belongs to the metallo-dependent hydrolases superfamily. Urease alpha subunit family.</text>
</comment>
<evidence type="ECO:0000255" key="1">
    <source>
        <dbReference type="HAMAP-Rule" id="MF_01953"/>
    </source>
</evidence>
<evidence type="ECO:0000269" key="2">
    <source>
    </source>
</evidence>
<reference key="1">
    <citation type="journal article" date="1999" name="Microbiology">
        <title>The marine cyanobacterium Synechococcus sp. WH7805 requires urease (urea amidohydrolase, EC 3.5.1.5) to utilize urea as a nitrogen source: molecular-genetic and biochemical analysis of the enzyme.</title>
        <authorList>
            <person name="Collier J.L."/>
            <person name="Brahamsha B."/>
            <person name="Palenik B."/>
        </authorList>
    </citation>
    <scope>NUCLEOTIDE SEQUENCE [GENOMIC DNA]</scope>
    <scope>CATALYTIC ACTIVITY</scope>
    <scope>BIOPHYSICOCHEMICAL PROPERTIES</scope>
</reference>
<accession>O87402</accession>
<protein>
    <recommendedName>
        <fullName evidence="1">Urease subunit alpha</fullName>
        <ecNumber evidence="1">3.5.1.5</ecNumber>
    </recommendedName>
    <alternativeName>
        <fullName evidence="1">Urea amidohydrolase subunit alpha</fullName>
    </alternativeName>
</protein>
<name>URE1_SYNPV</name>
<feature type="chain" id="PRO_0000234190" description="Urease subunit alpha">
    <location>
        <begin position="1"/>
        <end position="569"/>
    </location>
</feature>
<feature type="domain" description="Urease" evidence="1">
    <location>
        <begin position="131"/>
        <end position="569"/>
    </location>
</feature>
<feature type="active site" description="Proton donor" evidence="1">
    <location>
        <position position="322"/>
    </location>
</feature>
<feature type="binding site" evidence="1">
    <location>
        <position position="136"/>
    </location>
    <ligand>
        <name>Ni(2+)</name>
        <dbReference type="ChEBI" id="CHEBI:49786"/>
        <label>1</label>
    </ligand>
</feature>
<feature type="binding site" evidence="1">
    <location>
        <position position="138"/>
    </location>
    <ligand>
        <name>Ni(2+)</name>
        <dbReference type="ChEBI" id="CHEBI:49786"/>
        <label>1</label>
    </ligand>
</feature>
<feature type="binding site" description="via carbamate group" evidence="1">
    <location>
        <position position="219"/>
    </location>
    <ligand>
        <name>Ni(2+)</name>
        <dbReference type="ChEBI" id="CHEBI:49786"/>
        <label>1</label>
    </ligand>
</feature>
<feature type="binding site" description="via carbamate group" evidence="1">
    <location>
        <position position="219"/>
    </location>
    <ligand>
        <name>Ni(2+)</name>
        <dbReference type="ChEBI" id="CHEBI:49786"/>
        <label>2</label>
    </ligand>
</feature>
<feature type="binding site" evidence="1">
    <location>
        <position position="221"/>
    </location>
    <ligand>
        <name>substrate</name>
    </ligand>
</feature>
<feature type="binding site" evidence="1">
    <location>
        <position position="248"/>
    </location>
    <ligand>
        <name>Ni(2+)</name>
        <dbReference type="ChEBI" id="CHEBI:49786"/>
        <label>2</label>
    </ligand>
</feature>
<feature type="binding site" evidence="1">
    <location>
        <position position="274"/>
    </location>
    <ligand>
        <name>Ni(2+)</name>
        <dbReference type="ChEBI" id="CHEBI:49786"/>
        <label>2</label>
    </ligand>
</feature>
<feature type="binding site" evidence="1">
    <location>
        <position position="362"/>
    </location>
    <ligand>
        <name>Ni(2+)</name>
        <dbReference type="ChEBI" id="CHEBI:49786"/>
        <label>1</label>
    </ligand>
</feature>
<feature type="modified residue" description="N6-carboxylysine" evidence="1">
    <location>
        <position position="219"/>
    </location>
</feature>
<proteinExistence type="evidence at protein level"/>
<keyword id="KW-0963">Cytoplasm</keyword>
<keyword id="KW-0378">Hydrolase</keyword>
<keyword id="KW-0479">Metal-binding</keyword>
<keyword id="KW-0533">Nickel</keyword>
<gene>
    <name evidence="1" type="primary">ureC</name>
</gene>
<sequence length="569" mass="60451">MPYRISRQAYAETYGPTTGDRLRLADTELILEVEKDFTVYGDEVKFGGGKVIRDGMGQSQTPRAGGAVDTVITNALILDWWGIVKADVGLKDGRIVGIGKAGNPDTQAGVTIVVGPGTEAIAGEGHILTAGGIDTHIHFICPQQIETALASGMTTLMGGGTGPATGTNATTCTPGAFHIGRMLQAAEGLPVNLGFFGKGNASTPEALEEQVRAGACGLKLHEDWGTTPATIDACLSVADRMDVQVCIHTDTLNEAGFVEDTIAAIKGRTIHTFHTEGAGGGHAPDIIKICGEANVLPSSTNPTRPYTRNTLEEHLDMLMVCHHLDPRIPEDVAFAESRIRRETIAAEDILHDLGAFSIIASDSQAMGRVGEVITRTFQTAHKMKVQRGALPQDSSRNDNHRLKRYIAKVTINPALAHGISSEVGSIETGKLADLVLWKPGFFGIRPEVVIKGGSIVWAQMGDANASIPTPGPVHGRPMFGAFGKALAPSCLTFVSEAAMDSDIQRHLGLERTCMAVKDTRSVGKSALKLNSALPKVSVDPQTYEVFADGELLTCEPAEVLPLAQRYLLL</sequence>
<dbReference type="EC" id="3.5.1.5" evidence="1"/>
<dbReference type="EMBL" id="AF056189">
    <property type="protein sequence ID" value="AAC61502.1"/>
    <property type="molecule type" value="Genomic_DNA"/>
</dbReference>
<dbReference type="RefSeq" id="WP_006042762.1">
    <property type="nucleotide sequence ID" value="NZ_CH724168.1"/>
</dbReference>
<dbReference type="SMR" id="O87402"/>
<dbReference type="STRING" id="59931.WH7805_09809"/>
<dbReference type="MEROPS" id="M38.982"/>
<dbReference type="eggNOG" id="COG0804">
    <property type="taxonomic scope" value="Bacteria"/>
</dbReference>
<dbReference type="OrthoDB" id="9802793at2"/>
<dbReference type="PhylomeDB" id="O87402"/>
<dbReference type="UniPathway" id="UPA00258">
    <property type="reaction ID" value="UER00370"/>
</dbReference>
<dbReference type="GO" id="GO:0005737">
    <property type="term" value="C:cytoplasm"/>
    <property type="evidence" value="ECO:0007669"/>
    <property type="project" value="UniProtKB-SubCell"/>
</dbReference>
<dbReference type="GO" id="GO:0016151">
    <property type="term" value="F:nickel cation binding"/>
    <property type="evidence" value="ECO:0007669"/>
    <property type="project" value="UniProtKB-UniRule"/>
</dbReference>
<dbReference type="GO" id="GO:0009039">
    <property type="term" value="F:urease activity"/>
    <property type="evidence" value="ECO:0007669"/>
    <property type="project" value="UniProtKB-UniRule"/>
</dbReference>
<dbReference type="GO" id="GO:0043419">
    <property type="term" value="P:urea catabolic process"/>
    <property type="evidence" value="ECO:0007669"/>
    <property type="project" value="UniProtKB-UniRule"/>
</dbReference>
<dbReference type="CDD" id="cd00375">
    <property type="entry name" value="Urease_alpha"/>
    <property type="match status" value="1"/>
</dbReference>
<dbReference type="Gene3D" id="3.20.20.140">
    <property type="entry name" value="Metal-dependent hydrolases"/>
    <property type="match status" value="1"/>
</dbReference>
<dbReference type="Gene3D" id="2.30.40.10">
    <property type="entry name" value="Urease, subunit C, domain 1"/>
    <property type="match status" value="1"/>
</dbReference>
<dbReference type="HAMAP" id="MF_01953">
    <property type="entry name" value="Urease_alpha"/>
    <property type="match status" value="1"/>
</dbReference>
<dbReference type="InterPro" id="IPR006680">
    <property type="entry name" value="Amidohydro-rel"/>
</dbReference>
<dbReference type="InterPro" id="IPR011059">
    <property type="entry name" value="Metal-dep_hydrolase_composite"/>
</dbReference>
<dbReference type="InterPro" id="IPR032466">
    <property type="entry name" value="Metal_Hydrolase"/>
</dbReference>
<dbReference type="InterPro" id="IPR011612">
    <property type="entry name" value="Urease_alpha_N_dom"/>
</dbReference>
<dbReference type="InterPro" id="IPR050112">
    <property type="entry name" value="Urease_alpha_subunit"/>
</dbReference>
<dbReference type="InterPro" id="IPR017950">
    <property type="entry name" value="Urease_AS"/>
</dbReference>
<dbReference type="InterPro" id="IPR005848">
    <property type="entry name" value="Urease_asu"/>
</dbReference>
<dbReference type="InterPro" id="IPR017951">
    <property type="entry name" value="Urease_asu_c"/>
</dbReference>
<dbReference type="InterPro" id="IPR029754">
    <property type="entry name" value="Urease_Ni-bd"/>
</dbReference>
<dbReference type="NCBIfam" id="NF009685">
    <property type="entry name" value="PRK13206.1"/>
    <property type="match status" value="1"/>
</dbReference>
<dbReference type="NCBIfam" id="NF009686">
    <property type="entry name" value="PRK13207.1"/>
    <property type="match status" value="1"/>
</dbReference>
<dbReference type="NCBIfam" id="TIGR01792">
    <property type="entry name" value="urease_alph"/>
    <property type="match status" value="1"/>
</dbReference>
<dbReference type="PANTHER" id="PTHR43440">
    <property type="entry name" value="UREASE"/>
    <property type="match status" value="1"/>
</dbReference>
<dbReference type="PANTHER" id="PTHR43440:SF1">
    <property type="entry name" value="UREASE"/>
    <property type="match status" value="1"/>
</dbReference>
<dbReference type="Pfam" id="PF01979">
    <property type="entry name" value="Amidohydro_1"/>
    <property type="match status" value="1"/>
</dbReference>
<dbReference type="Pfam" id="PF00449">
    <property type="entry name" value="Urease_alpha"/>
    <property type="match status" value="1"/>
</dbReference>
<dbReference type="PRINTS" id="PR01752">
    <property type="entry name" value="UREASE"/>
</dbReference>
<dbReference type="SUPFAM" id="SSF51338">
    <property type="entry name" value="Composite domain of metallo-dependent hydrolases"/>
    <property type="match status" value="2"/>
</dbReference>
<dbReference type="SUPFAM" id="SSF51556">
    <property type="entry name" value="Metallo-dependent hydrolases"/>
    <property type="match status" value="1"/>
</dbReference>
<dbReference type="PROSITE" id="PS01120">
    <property type="entry name" value="UREASE_1"/>
    <property type="match status" value="1"/>
</dbReference>
<dbReference type="PROSITE" id="PS00145">
    <property type="entry name" value="UREASE_2"/>
    <property type="match status" value="1"/>
</dbReference>
<dbReference type="PROSITE" id="PS51368">
    <property type="entry name" value="UREASE_3"/>
    <property type="match status" value="1"/>
</dbReference>